<proteinExistence type="inferred from homology"/>
<sequence length="549" mass="59022">MKRVLTALAAALPFAAHAADAISGAVERQPTNWQAIIMFLIFVVFTLGITYWASKRVRSRSDYYTAGGNITGFQNGLAIAGDYMSAASFLGISALVFTSGYDGLIYSLGFLVGWPIILFLIAERLRNLGRYTFADVASYRLKQGPIRILSACGSLVVVALYLIAQMVGAGKLIELLFGLNYHIAVVLVGVLMMMYVLFGGMLATTWVQIIKAVLLLFGASFMAFMVMKHVGFSFNNLFTEAMAVHPKGTAIMSPGGLVQDPISALSLGLGLMFGTAGLPHILMRFFTVSDAREARKSVFYATGFMGYFYILTFIIGFGAIMLVGANPAYKDAAGALIGGNNMAAVHLANAVGGNLFLGFISAVAFATILAVVAGLTLAGASAVSHDLYANVFRKGATEREELKVSKITVLVLGVIAIILGILFENQNIAFMVGLAFAIAASCNFPIILLSMYWSKLTTRGAMLGGWLGLLTAVVLMILGPTIWVQILGHEKAIFPYEYPALFSISVAFLGIWFFSATDNSAEGNREREQFRAQFIRSQTGFGVQQGRAH</sequence>
<protein>
    <recommendedName>
        <fullName evidence="1">Cation/acetate symporter ActP</fullName>
    </recommendedName>
    <alternativeName>
        <fullName evidence="1">Acetate permease</fullName>
    </alternativeName>
    <alternativeName>
        <fullName evidence="1">Acetate transporter ActP</fullName>
    </alternativeName>
</protein>
<accession>B4T1W9</accession>
<dbReference type="EMBL" id="CP001113">
    <property type="protein sequence ID" value="ACF63445.1"/>
    <property type="molecule type" value="Genomic_DNA"/>
</dbReference>
<dbReference type="RefSeq" id="WP_000832533.1">
    <property type="nucleotide sequence ID" value="NZ_CCMR01000003.1"/>
</dbReference>
<dbReference type="SMR" id="B4T1W9"/>
<dbReference type="KEGG" id="see:SNSL254_A4619"/>
<dbReference type="HOGENOM" id="CLU_018808_8_3_6"/>
<dbReference type="Proteomes" id="UP000008824">
    <property type="component" value="Chromosome"/>
</dbReference>
<dbReference type="GO" id="GO:0005886">
    <property type="term" value="C:plasma membrane"/>
    <property type="evidence" value="ECO:0007669"/>
    <property type="project" value="UniProtKB-SubCell"/>
</dbReference>
<dbReference type="GO" id="GO:0015123">
    <property type="term" value="F:acetate transmembrane transporter activity"/>
    <property type="evidence" value="ECO:0007669"/>
    <property type="project" value="UniProtKB-UniRule"/>
</dbReference>
<dbReference type="GO" id="GO:0043879">
    <property type="term" value="F:glycolate transmembrane transporter activity"/>
    <property type="evidence" value="ECO:0007669"/>
    <property type="project" value="InterPro"/>
</dbReference>
<dbReference type="GO" id="GO:0015293">
    <property type="term" value="F:symporter activity"/>
    <property type="evidence" value="ECO:0007669"/>
    <property type="project" value="UniProtKB-KW"/>
</dbReference>
<dbReference type="GO" id="GO:0006847">
    <property type="term" value="P:plasma membrane acetate transport"/>
    <property type="evidence" value="ECO:0007669"/>
    <property type="project" value="TreeGrafter"/>
</dbReference>
<dbReference type="GO" id="GO:0006814">
    <property type="term" value="P:sodium ion transport"/>
    <property type="evidence" value="ECO:0007669"/>
    <property type="project" value="UniProtKB-KW"/>
</dbReference>
<dbReference type="CDD" id="cd11480">
    <property type="entry name" value="SLC5sbd_u4"/>
    <property type="match status" value="1"/>
</dbReference>
<dbReference type="FunFam" id="1.20.1730.10:FF:000001">
    <property type="entry name" value="Cation/acetate symporter ActP"/>
    <property type="match status" value="1"/>
</dbReference>
<dbReference type="Gene3D" id="1.20.1730.10">
    <property type="entry name" value="Sodium/glucose cotransporter"/>
    <property type="match status" value="1"/>
</dbReference>
<dbReference type="HAMAP" id="MF_01426">
    <property type="entry name" value="Acet_symport_ActP"/>
    <property type="match status" value="1"/>
</dbReference>
<dbReference type="InterPro" id="IPR014083">
    <property type="entry name" value="Cation/Ac_symporter_ActP"/>
</dbReference>
<dbReference type="InterPro" id="IPR038377">
    <property type="entry name" value="Na/Glc_symporter_sf"/>
</dbReference>
<dbReference type="InterPro" id="IPR001734">
    <property type="entry name" value="Na/solute_symporter"/>
</dbReference>
<dbReference type="InterPro" id="IPR018212">
    <property type="entry name" value="Na/solute_symporter_CS"/>
</dbReference>
<dbReference type="InterPro" id="IPR050277">
    <property type="entry name" value="Sodium:Solute_Symporter"/>
</dbReference>
<dbReference type="NCBIfam" id="NF006903">
    <property type="entry name" value="PRK09395.1"/>
    <property type="match status" value="1"/>
</dbReference>
<dbReference type="NCBIfam" id="NF009135">
    <property type="entry name" value="PRK12488.1"/>
    <property type="match status" value="1"/>
</dbReference>
<dbReference type="NCBIfam" id="TIGR00813">
    <property type="entry name" value="sss"/>
    <property type="match status" value="1"/>
</dbReference>
<dbReference type="NCBIfam" id="TIGR02711">
    <property type="entry name" value="symport_actP"/>
    <property type="match status" value="1"/>
</dbReference>
<dbReference type="PANTHER" id="PTHR48086:SF6">
    <property type="entry name" value="CATION_ACETATE SYMPORTER ACTP"/>
    <property type="match status" value="1"/>
</dbReference>
<dbReference type="PANTHER" id="PTHR48086">
    <property type="entry name" value="SODIUM/PROLINE SYMPORTER-RELATED"/>
    <property type="match status" value="1"/>
</dbReference>
<dbReference type="Pfam" id="PF00474">
    <property type="entry name" value="SSF"/>
    <property type="match status" value="1"/>
</dbReference>
<dbReference type="PROSITE" id="PS00456">
    <property type="entry name" value="NA_SOLUT_SYMP_1"/>
    <property type="match status" value="1"/>
</dbReference>
<dbReference type="PROSITE" id="PS00457">
    <property type="entry name" value="NA_SOLUT_SYMP_2"/>
    <property type="match status" value="1"/>
</dbReference>
<dbReference type="PROSITE" id="PS50283">
    <property type="entry name" value="NA_SOLUT_SYMP_3"/>
    <property type="match status" value="1"/>
</dbReference>
<organism>
    <name type="scientific">Salmonella newport (strain SL254)</name>
    <dbReference type="NCBI Taxonomy" id="423368"/>
    <lineage>
        <taxon>Bacteria</taxon>
        <taxon>Pseudomonadati</taxon>
        <taxon>Pseudomonadota</taxon>
        <taxon>Gammaproteobacteria</taxon>
        <taxon>Enterobacterales</taxon>
        <taxon>Enterobacteriaceae</taxon>
        <taxon>Salmonella</taxon>
    </lineage>
</organism>
<gene>
    <name evidence="1" type="primary">actP</name>
    <name type="ordered locus">SNSL254_A4619</name>
</gene>
<keyword id="KW-0997">Cell inner membrane</keyword>
<keyword id="KW-1003">Cell membrane</keyword>
<keyword id="KW-0406">Ion transport</keyword>
<keyword id="KW-0472">Membrane</keyword>
<keyword id="KW-0915">Sodium</keyword>
<keyword id="KW-0739">Sodium transport</keyword>
<keyword id="KW-0769">Symport</keyword>
<keyword id="KW-0812">Transmembrane</keyword>
<keyword id="KW-1133">Transmembrane helix</keyword>
<keyword id="KW-0813">Transport</keyword>
<comment type="function">
    <text evidence="1">Transports acetate.</text>
</comment>
<comment type="subcellular location">
    <subcellularLocation>
        <location evidence="1">Cell inner membrane</location>
        <topology evidence="1">Multi-pass membrane protein</topology>
    </subcellularLocation>
</comment>
<comment type="similarity">
    <text evidence="1">Belongs to the sodium:solute symporter (SSF) (TC 2.A.21) family.</text>
</comment>
<feature type="chain" id="PRO_1000145727" description="Cation/acetate symporter ActP">
    <location>
        <begin position="1"/>
        <end position="549"/>
    </location>
</feature>
<feature type="transmembrane region" description="Helical" evidence="1">
    <location>
        <begin position="33"/>
        <end position="53"/>
    </location>
</feature>
<feature type="transmembrane region" description="Helical" evidence="1">
    <location>
        <begin position="77"/>
        <end position="97"/>
    </location>
</feature>
<feature type="transmembrane region" description="Helical" evidence="1">
    <location>
        <begin position="103"/>
        <end position="123"/>
    </location>
</feature>
<feature type="transmembrane region" description="Helical" evidence="1">
    <location>
        <begin position="148"/>
        <end position="168"/>
    </location>
</feature>
<feature type="transmembrane region" description="Helical" evidence="1">
    <location>
        <begin position="183"/>
        <end position="203"/>
    </location>
</feature>
<feature type="transmembrane region" description="Helical" evidence="1">
    <location>
        <begin position="206"/>
        <end position="226"/>
    </location>
</feature>
<feature type="transmembrane region" description="Helical" evidence="1">
    <location>
        <begin position="262"/>
        <end position="282"/>
    </location>
</feature>
<feature type="transmembrane region" description="Helical" evidence="1">
    <location>
        <begin position="303"/>
        <end position="323"/>
    </location>
</feature>
<feature type="transmembrane region" description="Helical" evidence="1">
    <location>
        <begin position="355"/>
        <end position="375"/>
    </location>
</feature>
<feature type="transmembrane region" description="Helical" evidence="1">
    <location>
        <begin position="404"/>
        <end position="424"/>
    </location>
</feature>
<feature type="transmembrane region" description="Helical" evidence="1">
    <location>
        <begin position="428"/>
        <end position="448"/>
    </location>
</feature>
<feature type="transmembrane region" description="Helical" evidence="1">
    <location>
        <begin position="464"/>
        <end position="484"/>
    </location>
</feature>
<feature type="transmembrane region" description="Helical" evidence="1">
    <location>
        <begin position="493"/>
        <end position="513"/>
    </location>
</feature>
<reference key="1">
    <citation type="journal article" date="2011" name="J. Bacteriol.">
        <title>Comparative genomics of 28 Salmonella enterica isolates: evidence for CRISPR-mediated adaptive sublineage evolution.</title>
        <authorList>
            <person name="Fricke W.F."/>
            <person name="Mammel M.K."/>
            <person name="McDermott P.F."/>
            <person name="Tartera C."/>
            <person name="White D.G."/>
            <person name="Leclerc J.E."/>
            <person name="Ravel J."/>
            <person name="Cebula T.A."/>
        </authorList>
    </citation>
    <scope>NUCLEOTIDE SEQUENCE [LARGE SCALE GENOMIC DNA]</scope>
    <source>
        <strain>SL254</strain>
    </source>
</reference>
<evidence type="ECO:0000255" key="1">
    <source>
        <dbReference type="HAMAP-Rule" id="MF_01426"/>
    </source>
</evidence>
<name>ACTP_SALNS</name>